<feature type="chain" id="PRO_1000140141" description="Shikimate kinase 2">
    <location>
        <begin position="1"/>
        <end position="181"/>
    </location>
</feature>
<feature type="region of interest" description="LID domain">
    <location>
        <begin position="112"/>
        <end position="126"/>
    </location>
</feature>
<feature type="binding site" evidence="1">
    <location>
        <begin position="12"/>
        <end position="17"/>
    </location>
    <ligand>
        <name>ATP</name>
        <dbReference type="ChEBI" id="CHEBI:30616"/>
    </ligand>
</feature>
<feature type="binding site" evidence="1">
    <location>
        <position position="16"/>
    </location>
    <ligand>
        <name>Mg(2+)</name>
        <dbReference type="ChEBI" id="CHEBI:18420"/>
    </ligand>
</feature>
<feature type="binding site" evidence="1">
    <location>
        <position position="32"/>
    </location>
    <ligand>
        <name>Mg(2+)</name>
        <dbReference type="ChEBI" id="CHEBI:18420"/>
    </ligand>
</feature>
<feature type="binding site" evidence="1">
    <location>
        <position position="34"/>
    </location>
    <ligand>
        <name>substrate</name>
    </ligand>
</feature>
<feature type="binding site" evidence="1">
    <location>
        <position position="58"/>
    </location>
    <ligand>
        <name>substrate</name>
    </ligand>
</feature>
<feature type="binding site" evidence="1">
    <location>
        <position position="79"/>
    </location>
    <ligand>
        <name>substrate</name>
    </ligand>
</feature>
<feature type="binding site" evidence="1">
    <location>
        <position position="120"/>
    </location>
    <ligand>
        <name>ATP</name>
        <dbReference type="ChEBI" id="CHEBI:30616"/>
    </ligand>
</feature>
<feature type="binding site" evidence="1">
    <location>
        <position position="139"/>
    </location>
    <ligand>
        <name>substrate</name>
    </ligand>
</feature>
<reference key="1">
    <citation type="journal article" date="2011" name="J. Bacteriol.">
        <title>Comparative genomics of 28 Salmonella enterica isolates: evidence for CRISPR-mediated adaptive sublineage evolution.</title>
        <authorList>
            <person name="Fricke W.F."/>
            <person name="Mammel M.K."/>
            <person name="McDermott P.F."/>
            <person name="Tartera C."/>
            <person name="White D.G."/>
            <person name="Leclerc J.E."/>
            <person name="Ravel J."/>
            <person name="Cebula T.A."/>
        </authorList>
    </citation>
    <scope>NUCLEOTIDE SEQUENCE [LARGE SCALE GENOMIC DNA]</scope>
    <source>
        <strain>SL476</strain>
    </source>
</reference>
<gene>
    <name evidence="1" type="primary">aroL</name>
    <name type="ordered locus">SeHA_C0486</name>
</gene>
<accession>B4T8M7</accession>
<protein>
    <recommendedName>
        <fullName evidence="1">Shikimate kinase 2</fullName>
        <shortName evidence="1">SK 2</shortName>
        <ecNumber evidence="1">2.7.1.71</ecNumber>
    </recommendedName>
</protein>
<comment type="function">
    <text evidence="1">Catalyzes the specific phosphorylation of the 3-hydroxyl group of shikimic acid using ATP as a cosubstrate.</text>
</comment>
<comment type="catalytic activity">
    <reaction evidence="1">
        <text>shikimate + ATP = 3-phosphoshikimate + ADP + H(+)</text>
        <dbReference type="Rhea" id="RHEA:13121"/>
        <dbReference type="ChEBI" id="CHEBI:15378"/>
        <dbReference type="ChEBI" id="CHEBI:30616"/>
        <dbReference type="ChEBI" id="CHEBI:36208"/>
        <dbReference type="ChEBI" id="CHEBI:145989"/>
        <dbReference type="ChEBI" id="CHEBI:456216"/>
        <dbReference type="EC" id="2.7.1.71"/>
    </reaction>
</comment>
<comment type="cofactor">
    <cofactor evidence="1">
        <name>Mg(2+)</name>
        <dbReference type="ChEBI" id="CHEBI:18420"/>
    </cofactor>
    <text evidence="1">Binds 1 Mg(2+) ion per subunit.</text>
</comment>
<comment type="pathway">
    <text evidence="1">Metabolic intermediate biosynthesis; chorismate biosynthesis; chorismate from D-erythrose 4-phosphate and phosphoenolpyruvate: step 5/7.</text>
</comment>
<comment type="subunit">
    <text evidence="1">Monomer.</text>
</comment>
<comment type="subcellular location">
    <subcellularLocation>
        <location evidence="1">Cytoplasm</location>
    </subcellularLocation>
</comment>
<comment type="domain">
    <text evidence="1">The LID domain closes over the active site upon ATP binding.</text>
</comment>
<comment type="similarity">
    <text evidence="1">Belongs to the shikimate kinase family. AroL subfamily.</text>
</comment>
<keyword id="KW-0028">Amino-acid biosynthesis</keyword>
<keyword id="KW-0057">Aromatic amino acid biosynthesis</keyword>
<keyword id="KW-0067">ATP-binding</keyword>
<keyword id="KW-0963">Cytoplasm</keyword>
<keyword id="KW-0418">Kinase</keyword>
<keyword id="KW-0460">Magnesium</keyword>
<keyword id="KW-0479">Metal-binding</keyword>
<keyword id="KW-0547">Nucleotide-binding</keyword>
<keyword id="KW-0808">Transferase</keyword>
<sequence>MMQPLYLVGPRGCGKTTIGMALAQATGFRFADTDRWLQSHVQMSVADIVEKEGWGGFRARETAALEAVSAPSTVVATGGGIILTEYNRRYMHRVGVVIYLCAPVSTLVNRLEAEPEADLRPTLTGKPLSEEVREVLEQRDALYRETAHYIIDATKTPAQVVSEIIAALPPSTQRLQGDVYT</sequence>
<evidence type="ECO:0000255" key="1">
    <source>
        <dbReference type="HAMAP-Rule" id="MF_01269"/>
    </source>
</evidence>
<dbReference type="EC" id="2.7.1.71" evidence="1"/>
<dbReference type="EMBL" id="CP001120">
    <property type="protein sequence ID" value="ACF67555.1"/>
    <property type="molecule type" value="Genomic_DNA"/>
</dbReference>
<dbReference type="RefSeq" id="WP_000983570.1">
    <property type="nucleotide sequence ID" value="NC_011083.1"/>
</dbReference>
<dbReference type="SMR" id="B4T8M7"/>
<dbReference type="KEGG" id="seh:SeHA_C0486"/>
<dbReference type="HOGENOM" id="CLU_057607_4_3_6"/>
<dbReference type="UniPathway" id="UPA00053">
    <property type="reaction ID" value="UER00088"/>
</dbReference>
<dbReference type="Proteomes" id="UP000001866">
    <property type="component" value="Chromosome"/>
</dbReference>
<dbReference type="GO" id="GO:0005829">
    <property type="term" value="C:cytosol"/>
    <property type="evidence" value="ECO:0007669"/>
    <property type="project" value="TreeGrafter"/>
</dbReference>
<dbReference type="GO" id="GO:0005524">
    <property type="term" value="F:ATP binding"/>
    <property type="evidence" value="ECO:0007669"/>
    <property type="project" value="UniProtKB-UniRule"/>
</dbReference>
<dbReference type="GO" id="GO:0000287">
    <property type="term" value="F:magnesium ion binding"/>
    <property type="evidence" value="ECO:0007669"/>
    <property type="project" value="UniProtKB-UniRule"/>
</dbReference>
<dbReference type="GO" id="GO:0004765">
    <property type="term" value="F:shikimate kinase activity"/>
    <property type="evidence" value="ECO:0007669"/>
    <property type="project" value="UniProtKB-UniRule"/>
</dbReference>
<dbReference type="GO" id="GO:0008652">
    <property type="term" value="P:amino acid biosynthetic process"/>
    <property type="evidence" value="ECO:0007669"/>
    <property type="project" value="UniProtKB-KW"/>
</dbReference>
<dbReference type="GO" id="GO:0009073">
    <property type="term" value="P:aromatic amino acid family biosynthetic process"/>
    <property type="evidence" value="ECO:0007669"/>
    <property type="project" value="UniProtKB-KW"/>
</dbReference>
<dbReference type="GO" id="GO:0009423">
    <property type="term" value="P:chorismate biosynthetic process"/>
    <property type="evidence" value="ECO:0007669"/>
    <property type="project" value="UniProtKB-UniRule"/>
</dbReference>
<dbReference type="CDD" id="cd00464">
    <property type="entry name" value="SK"/>
    <property type="match status" value="1"/>
</dbReference>
<dbReference type="FunFam" id="3.40.50.300:FF:000408">
    <property type="entry name" value="Shikimate kinase 2"/>
    <property type="match status" value="1"/>
</dbReference>
<dbReference type="Gene3D" id="3.40.50.300">
    <property type="entry name" value="P-loop containing nucleotide triphosphate hydrolases"/>
    <property type="match status" value="1"/>
</dbReference>
<dbReference type="HAMAP" id="MF_00109">
    <property type="entry name" value="Shikimate_kinase"/>
    <property type="match status" value="1"/>
</dbReference>
<dbReference type="HAMAP" id="MF_01269">
    <property type="entry name" value="Shikimate_kinase_2"/>
    <property type="match status" value="1"/>
</dbReference>
<dbReference type="InterPro" id="IPR027417">
    <property type="entry name" value="P-loop_NTPase"/>
</dbReference>
<dbReference type="InterPro" id="IPR031322">
    <property type="entry name" value="Shikimate/glucono_kinase"/>
</dbReference>
<dbReference type="InterPro" id="IPR000623">
    <property type="entry name" value="Shikimate_kinase/TSH1"/>
</dbReference>
<dbReference type="InterPro" id="IPR027544">
    <property type="entry name" value="Shikimate_kinase_2"/>
</dbReference>
<dbReference type="InterPro" id="IPR023000">
    <property type="entry name" value="Shikimate_kinase_CS"/>
</dbReference>
<dbReference type="NCBIfam" id="NF002988">
    <property type="entry name" value="PRK03731.1"/>
    <property type="match status" value="1"/>
</dbReference>
<dbReference type="PANTHER" id="PTHR21087">
    <property type="entry name" value="SHIKIMATE KINASE"/>
    <property type="match status" value="1"/>
</dbReference>
<dbReference type="PANTHER" id="PTHR21087:SF21">
    <property type="entry name" value="SHIKIMATE KINASE 2"/>
    <property type="match status" value="1"/>
</dbReference>
<dbReference type="Pfam" id="PF01202">
    <property type="entry name" value="SKI"/>
    <property type="match status" value="1"/>
</dbReference>
<dbReference type="PRINTS" id="PR01100">
    <property type="entry name" value="SHIKIMTKNASE"/>
</dbReference>
<dbReference type="SUPFAM" id="SSF52540">
    <property type="entry name" value="P-loop containing nucleoside triphosphate hydrolases"/>
    <property type="match status" value="1"/>
</dbReference>
<dbReference type="PROSITE" id="PS01128">
    <property type="entry name" value="SHIKIMATE_KINASE"/>
    <property type="match status" value="1"/>
</dbReference>
<organism>
    <name type="scientific">Salmonella heidelberg (strain SL476)</name>
    <dbReference type="NCBI Taxonomy" id="454169"/>
    <lineage>
        <taxon>Bacteria</taxon>
        <taxon>Pseudomonadati</taxon>
        <taxon>Pseudomonadota</taxon>
        <taxon>Gammaproteobacteria</taxon>
        <taxon>Enterobacterales</taxon>
        <taxon>Enterobacteriaceae</taxon>
        <taxon>Salmonella</taxon>
    </lineage>
</organism>
<name>AROL_SALHS</name>
<proteinExistence type="inferred from homology"/>